<sequence length="497" mass="55883">MTSKKFSDKKNNYDAILVGAGIMSGTLALLLTEILPELKILIIEKLKIPGSESSGAFNNAGTGHAANCELNYTPLDDYGHLKIEKALSINRSFEKSMSLWASLYSSQKIDIKKFLKFIPHISFVTGSENVSFLKKRFKKMTEYKEFEDMEFSSSFNQISSWAPLITKSRNPLDEVAATRVKRGTDINFEVLTREYLKYISKNKNVEISYETELNDLKKTSNKEWELNISMEGRKVNLKTSYVFLGAGGKTINYLQKSNIPEAKVYGGFPVSGKWLICEENSLTEKHNAKVYGRADIGSPPMSVPHLDTRWIEGKKFLLYGPFAGFTTKFLKQGSYLDLFNSLKKNNLLSMLDVGIKNNDLINYLFSQSIKSHKSRVENLRNMMPSADPSNWYLENAGQRVQIIKKTKKGGSLKFGTEIVNAADGSLSALLGASPGASTAVSIMIEVLKKSCLFTLDKSILEQKISHLLYESELKNQNENDFLENLKKRNNSILGFHP</sequence>
<comment type="catalytic activity">
    <reaction evidence="1">
        <text>(S)-malate + a quinone = a quinol + oxaloacetate</text>
        <dbReference type="Rhea" id="RHEA:46012"/>
        <dbReference type="ChEBI" id="CHEBI:15589"/>
        <dbReference type="ChEBI" id="CHEBI:16452"/>
        <dbReference type="ChEBI" id="CHEBI:24646"/>
        <dbReference type="ChEBI" id="CHEBI:132124"/>
        <dbReference type="EC" id="1.1.5.4"/>
    </reaction>
</comment>
<comment type="cofactor">
    <cofactor evidence="1">
        <name>FAD</name>
        <dbReference type="ChEBI" id="CHEBI:57692"/>
    </cofactor>
</comment>
<comment type="pathway">
    <text evidence="1">Carbohydrate metabolism; tricarboxylic acid cycle; oxaloacetate from (S)-malate (quinone route): step 1/1.</text>
</comment>
<comment type="similarity">
    <text evidence="1">Belongs to the MQO family.</text>
</comment>
<reference key="1">
    <citation type="journal article" date="2007" name="PLoS Genet.">
        <title>Patterns and implications of gene gain and loss in the evolution of Prochlorococcus.</title>
        <authorList>
            <person name="Kettler G.C."/>
            <person name="Martiny A.C."/>
            <person name="Huang K."/>
            <person name="Zucker J."/>
            <person name="Coleman M.L."/>
            <person name="Rodrigue S."/>
            <person name="Chen F."/>
            <person name="Lapidus A."/>
            <person name="Ferriera S."/>
            <person name="Johnson J."/>
            <person name="Steglich C."/>
            <person name="Church G.M."/>
            <person name="Richardson P."/>
            <person name="Chisholm S.W."/>
        </authorList>
    </citation>
    <scope>NUCLEOTIDE SEQUENCE [LARGE SCALE GENOMIC DNA]</scope>
    <source>
        <strain>MIT 9515</strain>
    </source>
</reference>
<accession>A2BV78</accession>
<evidence type="ECO:0000255" key="1">
    <source>
        <dbReference type="HAMAP-Rule" id="MF_00212"/>
    </source>
</evidence>
<feature type="chain" id="PRO_1000023813" description="Probable malate:quinone oxidoreductase">
    <location>
        <begin position="1"/>
        <end position="497"/>
    </location>
</feature>
<name>MQO_PROM5</name>
<gene>
    <name evidence="1" type="primary">mqo</name>
    <name type="ordered locus">P9515_04801</name>
</gene>
<keyword id="KW-0274">FAD</keyword>
<keyword id="KW-0285">Flavoprotein</keyword>
<keyword id="KW-0560">Oxidoreductase</keyword>
<keyword id="KW-0816">Tricarboxylic acid cycle</keyword>
<protein>
    <recommendedName>
        <fullName evidence="1">Probable malate:quinone oxidoreductase</fullName>
        <ecNumber evidence="1">1.1.5.4</ecNumber>
    </recommendedName>
    <alternativeName>
        <fullName evidence="1">MQO</fullName>
    </alternativeName>
    <alternativeName>
        <fullName evidence="1">Malate dehydrogenase [quinone]</fullName>
    </alternativeName>
</protein>
<organism>
    <name type="scientific">Prochlorococcus marinus (strain MIT 9515)</name>
    <dbReference type="NCBI Taxonomy" id="167542"/>
    <lineage>
        <taxon>Bacteria</taxon>
        <taxon>Bacillati</taxon>
        <taxon>Cyanobacteriota</taxon>
        <taxon>Cyanophyceae</taxon>
        <taxon>Synechococcales</taxon>
        <taxon>Prochlorococcaceae</taxon>
        <taxon>Prochlorococcus</taxon>
    </lineage>
</organism>
<dbReference type="EC" id="1.1.5.4" evidence="1"/>
<dbReference type="EMBL" id="CP000552">
    <property type="protein sequence ID" value="ABM71689.1"/>
    <property type="molecule type" value="Genomic_DNA"/>
</dbReference>
<dbReference type="RefSeq" id="WP_011819797.1">
    <property type="nucleotide sequence ID" value="NC_008817.1"/>
</dbReference>
<dbReference type="SMR" id="A2BV78"/>
<dbReference type="STRING" id="167542.P9515_04801"/>
<dbReference type="GeneID" id="60201391"/>
<dbReference type="KEGG" id="pmc:P9515_04801"/>
<dbReference type="eggNOG" id="COG0579">
    <property type="taxonomic scope" value="Bacteria"/>
</dbReference>
<dbReference type="HOGENOM" id="CLU_028151_0_0_3"/>
<dbReference type="OrthoDB" id="9763983at2"/>
<dbReference type="UniPathway" id="UPA00223">
    <property type="reaction ID" value="UER01008"/>
</dbReference>
<dbReference type="Proteomes" id="UP000001589">
    <property type="component" value="Chromosome"/>
</dbReference>
<dbReference type="GO" id="GO:0047545">
    <property type="term" value="F:2-hydroxyglutarate dehydrogenase activity"/>
    <property type="evidence" value="ECO:0007669"/>
    <property type="project" value="TreeGrafter"/>
</dbReference>
<dbReference type="GO" id="GO:0008924">
    <property type="term" value="F:L-malate dehydrogenase (quinone) activity"/>
    <property type="evidence" value="ECO:0007669"/>
    <property type="project" value="UniProtKB-UniRule"/>
</dbReference>
<dbReference type="GO" id="GO:0006099">
    <property type="term" value="P:tricarboxylic acid cycle"/>
    <property type="evidence" value="ECO:0007669"/>
    <property type="project" value="UniProtKB-UniRule"/>
</dbReference>
<dbReference type="Gene3D" id="3.50.50.60">
    <property type="entry name" value="FAD/NAD(P)-binding domain"/>
    <property type="match status" value="1"/>
</dbReference>
<dbReference type="HAMAP" id="MF_00212">
    <property type="entry name" value="MQO"/>
    <property type="match status" value="1"/>
</dbReference>
<dbReference type="InterPro" id="IPR036188">
    <property type="entry name" value="FAD/NAD-bd_sf"/>
</dbReference>
<dbReference type="InterPro" id="IPR006231">
    <property type="entry name" value="MQO"/>
</dbReference>
<dbReference type="NCBIfam" id="TIGR01320">
    <property type="entry name" value="mal_quin_oxido"/>
    <property type="match status" value="1"/>
</dbReference>
<dbReference type="NCBIfam" id="NF003606">
    <property type="entry name" value="PRK05257.2-1"/>
    <property type="match status" value="1"/>
</dbReference>
<dbReference type="NCBIfam" id="NF003607">
    <property type="entry name" value="PRK05257.2-3"/>
    <property type="match status" value="1"/>
</dbReference>
<dbReference type="NCBIfam" id="NF003611">
    <property type="entry name" value="PRK05257.3-2"/>
    <property type="match status" value="1"/>
</dbReference>
<dbReference type="PANTHER" id="PTHR43104">
    <property type="entry name" value="L-2-HYDROXYGLUTARATE DEHYDROGENASE, MITOCHONDRIAL"/>
    <property type="match status" value="1"/>
</dbReference>
<dbReference type="PANTHER" id="PTHR43104:SF2">
    <property type="entry name" value="L-2-HYDROXYGLUTARATE DEHYDROGENASE, MITOCHONDRIAL"/>
    <property type="match status" value="1"/>
</dbReference>
<dbReference type="Pfam" id="PF06039">
    <property type="entry name" value="Mqo"/>
    <property type="match status" value="1"/>
</dbReference>
<dbReference type="SUPFAM" id="SSF51905">
    <property type="entry name" value="FAD/NAD(P)-binding domain"/>
    <property type="match status" value="1"/>
</dbReference>
<proteinExistence type="inferred from homology"/>